<reference key="1">
    <citation type="submission" date="2008-01" db="EMBL/GenBank/DDBJ databases">
        <title>Complete sequence of chromosome of Caulobacter sp. K31.</title>
        <authorList>
            <consortium name="US DOE Joint Genome Institute"/>
            <person name="Copeland A."/>
            <person name="Lucas S."/>
            <person name="Lapidus A."/>
            <person name="Barry K."/>
            <person name="Glavina del Rio T."/>
            <person name="Dalin E."/>
            <person name="Tice H."/>
            <person name="Pitluck S."/>
            <person name="Bruce D."/>
            <person name="Goodwin L."/>
            <person name="Thompson L.S."/>
            <person name="Brettin T."/>
            <person name="Detter J.C."/>
            <person name="Han C."/>
            <person name="Schmutz J."/>
            <person name="Larimer F."/>
            <person name="Land M."/>
            <person name="Hauser L."/>
            <person name="Kyrpides N."/>
            <person name="Kim E."/>
            <person name="Stephens C."/>
            <person name="Richardson P."/>
        </authorList>
    </citation>
    <scope>NUCLEOTIDE SEQUENCE [LARGE SCALE GENOMIC DNA]</scope>
    <source>
        <strain>K31</strain>
    </source>
</reference>
<dbReference type="EMBL" id="CP000927">
    <property type="protein sequence ID" value="ABZ72159.1"/>
    <property type="molecule type" value="Genomic_DNA"/>
</dbReference>
<dbReference type="SMR" id="B0T0T0"/>
<dbReference type="STRING" id="366602.Caul_3032"/>
<dbReference type="KEGG" id="cak:Caul_3032"/>
<dbReference type="eggNOG" id="COG0776">
    <property type="taxonomic scope" value="Bacteria"/>
</dbReference>
<dbReference type="HOGENOM" id="CLU_105066_1_1_5"/>
<dbReference type="OrthoDB" id="9804203at2"/>
<dbReference type="GO" id="GO:0005829">
    <property type="term" value="C:cytosol"/>
    <property type="evidence" value="ECO:0007669"/>
    <property type="project" value="TreeGrafter"/>
</dbReference>
<dbReference type="GO" id="GO:0003677">
    <property type="term" value="F:DNA binding"/>
    <property type="evidence" value="ECO:0007669"/>
    <property type="project" value="UniProtKB-UniRule"/>
</dbReference>
<dbReference type="GO" id="GO:0030527">
    <property type="term" value="F:structural constituent of chromatin"/>
    <property type="evidence" value="ECO:0007669"/>
    <property type="project" value="InterPro"/>
</dbReference>
<dbReference type="GO" id="GO:0006310">
    <property type="term" value="P:DNA recombination"/>
    <property type="evidence" value="ECO:0007669"/>
    <property type="project" value="UniProtKB-UniRule"/>
</dbReference>
<dbReference type="GO" id="GO:0009893">
    <property type="term" value="P:positive regulation of metabolic process"/>
    <property type="evidence" value="ECO:0007669"/>
    <property type="project" value="UniProtKB-ARBA"/>
</dbReference>
<dbReference type="GO" id="GO:0006355">
    <property type="term" value="P:regulation of DNA-templated transcription"/>
    <property type="evidence" value="ECO:0007669"/>
    <property type="project" value="UniProtKB-UniRule"/>
</dbReference>
<dbReference type="GO" id="GO:0006417">
    <property type="term" value="P:regulation of translation"/>
    <property type="evidence" value="ECO:0007669"/>
    <property type="project" value="UniProtKB-UniRule"/>
</dbReference>
<dbReference type="CDD" id="cd13835">
    <property type="entry name" value="IHF_A"/>
    <property type="match status" value="1"/>
</dbReference>
<dbReference type="Gene3D" id="4.10.520.10">
    <property type="entry name" value="IHF-like DNA-binding proteins"/>
    <property type="match status" value="1"/>
</dbReference>
<dbReference type="HAMAP" id="MF_00380">
    <property type="entry name" value="IHF_alpha"/>
    <property type="match status" value="1"/>
</dbReference>
<dbReference type="InterPro" id="IPR000119">
    <property type="entry name" value="Hist_DNA-bd"/>
</dbReference>
<dbReference type="InterPro" id="IPR020816">
    <property type="entry name" value="Histone-like_DNA-bd_CS"/>
</dbReference>
<dbReference type="InterPro" id="IPR010992">
    <property type="entry name" value="IHF-like_DNA-bd_dom_sf"/>
</dbReference>
<dbReference type="InterPro" id="IPR005684">
    <property type="entry name" value="IHF_alpha"/>
</dbReference>
<dbReference type="NCBIfam" id="TIGR00987">
    <property type="entry name" value="himA"/>
    <property type="match status" value="1"/>
</dbReference>
<dbReference type="NCBIfam" id="NF001401">
    <property type="entry name" value="PRK00285.1"/>
    <property type="match status" value="1"/>
</dbReference>
<dbReference type="PANTHER" id="PTHR33175">
    <property type="entry name" value="DNA-BINDING PROTEIN HU"/>
    <property type="match status" value="1"/>
</dbReference>
<dbReference type="PANTHER" id="PTHR33175:SF2">
    <property type="entry name" value="INTEGRATION HOST FACTOR SUBUNIT ALPHA"/>
    <property type="match status" value="1"/>
</dbReference>
<dbReference type="Pfam" id="PF00216">
    <property type="entry name" value="Bac_DNA_binding"/>
    <property type="match status" value="1"/>
</dbReference>
<dbReference type="PRINTS" id="PR01727">
    <property type="entry name" value="DNABINDINGHU"/>
</dbReference>
<dbReference type="SMART" id="SM00411">
    <property type="entry name" value="BHL"/>
    <property type="match status" value="1"/>
</dbReference>
<dbReference type="SUPFAM" id="SSF47729">
    <property type="entry name" value="IHF-like DNA-binding proteins"/>
    <property type="match status" value="1"/>
</dbReference>
<dbReference type="PROSITE" id="PS00045">
    <property type="entry name" value="HISTONE_LIKE"/>
    <property type="match status" value="1"/>
</dbReference>
<sequence length="100" mass="10937">MKGATLTRADLCEAVHEEVGLTRQDCAGLVERTLDLVAEALEKGETVKLSGFGVFQVRDKRARMGRNPKTGEPAEIEPRRVIGFRASQVMKARIDRALGG</sequence>
<name>IHFA_CAUSK</name>
<organism>
    <name type="scientific">Caulobacter sp. (strain K31)</name>
    <dbReference type="NCBI Taxonomy" id="366602"/>
    <lineage>
        <taxon>Bacteria</taxon>
        <taxon>Pseudomonadati</taxon>
        <taxon>Pseudomonadota</taxon>
        <taxon>Alphaproteobacteria</taxon>
        <taxon>Caulobacterales</taxon>
        <taxon>Caulobacteraceae</taxon>
        <taxon>Caulobacter</taxon>
    </lineage>
</organism>
<keyword id="KW-0233">DNA recombination</keyword>
<keyword id="KW-0238">DNA-binding</keyword>
<keyword id="KW-0804">Transcription</keyword>
<keyword id="KW-0805">Transcription regulation</keyword>
<keyword id="KW-0810">Translation regulation</keyword>
<protein>
    <recommendedName>
        <fullName evidence="1">Integration host factor subunit alpha</fullName>
        <shortName evidence="1">IHF-alpha</shortName>
    </recommendedName>
</protein>
<proteinExistence type="inferred from homology"/>
<comment type="function">
    <text evidence="1">This protein is one of the two subunits of integration host factor, a specific DNA-binding protein that functions in genetic recombination as well as in transcriptional and translational control.</text>
</comment>
<comment type="subunit">
    <text evidence="1">Heterodimer of an alpha and a beta chain.</text>
</comment>
<comment type="similarity">
    <text evidence="1">Belongs to the bacterial histone-like protein family.</text>
</comment>
<evidence type="ECO:0000255" key="1">
    <source>
        <dbReference type="HAMAP-Rule" id="MF_00380"/>
    </source>
</evidence>
<feature type="chain" id="PRO_1000080026" description="Integration host factor subunit alpha">
    <location>
        <begin position="1"/>
        <end position="100"/>
    </location>
</feature>
<accession>B0T0T0</accession>
<gene>
    <name evidence="1" type="primary">ihfA</name>
    <name evidence="1" type="synonym">himA</name>
    <name type="ordered locus">Caul_3032</name>
</gene>